<name>HISZ_HALOH</name>
<feature type="chain" id="PRO_1000122671" description="ATP phosphoribosyltransferase regulatory subunit">
    <location>
        <begin position="1"/>
        <end position="418"/>
    </location>
</feature>
<keyword id="KW-0028">Amino-acid biosynthesis</keyword>
<keyword id="KW-0963">Cytoplasm</keyword>
<keyword id="KW-0368">Histidine biosynthesis</keyword>
<keyword id="KW-1185">Reference proteome</keyword>
<reference key="1">
    <citation type="journal article" date="2009" name="PLoS ONE">
        <title>Genome analysis of the anaerobic thermohalophilic bacterium Halothermothrix orenii.</title>
        <authorList>
            <person name="Mavromatis K."/>
            <person name="Ivanova N."/>
            <person name="Anderson I."/>
            <person name="Lykidis A."/>
            <person name="Hooper S.D."/>
            <person name="Sun H."/>
            <person name="Kunin V."/>
            <person name="Lapidus A."/>
            <person name="Hugenholtz P."/>
            <person name="Patel B."/>
            <person name="Kyrpides N.C."/>
        </authorList>
    </citation>
    <scope>NUCLEOTIDE SEQUENCE [LARGE SCALE GENOMIC DNA]</scope>
    <source>
        <strain>H 168 / OCM 544 / DSM 9562</strain>
    </source>
</reference>
<proteinExistence type="inferred from homology"/>
<accession>B8D110</accession>
<protein>
    <recommendedName>
        <fullName evidence="1">ATP phosphoribosyltransferase regulatory subunit</fullName>
    </recommendedName>
</protein>
<organism>
    <name type="scientific">Halothermothrix orenii (strain H 168 / OCM 544 / DSM 9562)</name>
    <dbReference type="NCBI Taxonomy" id="373903"/>
    <lineage>
        <taxon>Bacteria</taxon>
        <taxon>Bacillati</taxon>
        <taxon>Bacillota</taxon>
        <taxon>Clostridia</taxon>
        <taxon>Halanaerobiales</taxon>
        <taxon>Halothermotrichaceae</taxon>
        <taxon>Halothermothrix</taxon>
    </lineage>
</organism>
<gene>
    <name evidence="1" type="primary">hisZ</name>
    <name type="ordered locus">Hore_02180</name>
</gene>
<comment type="function">
    <text evidence="1">Required for the first step of histidine biosynthesis. May allow the feedback regulation of ATP phosphoribosyltransferase activity by histidine.</text>
</comment>
<comment type="pathway">
    <text evidence="1">Amino-acid biosynthesis; L-histidine biosynthesis; L-histidine from 5-phospho-alpha-D-ribose 1-diphosphate: step 1/9.</text>
</comment>
<comment type="subunit">
    <text evidence="1">Heteromultimer composed of HisG and HisZ subunits.</text>
</comment>
<comment type="subcellular location">
    <subcellularLocation>
        <location evidence="1">Cytoplasm</location>
    </subcellularLocation>
</comment>
<comment type="miscellaneous">
    <text>This function is generally fulfilled by the C-terminal part of HisG, which is missing in some bacteria such as this one.</text>
</comment>
<comment type="similarity">
    <text evidence="1">Belongs to the class-II aminoacyl-tRNA synthetase family. HisZ subfamily.</text>
</comment>
<evidence type="ECO:0000255" key="1">
    <source>
        <dbReference type="HAMAP-Rule" id="MF_00125"/>
    </source>
</evidence>
<sequence length="418" mass="47801">MTENILNSPGGMRSYLDSIAFQLEEIQDRIKGVFRQWAYRPIITPTLEYYESLTTGIGEKYKKQMYKFIDYEGNILALRPEMTAPIARTVANKIDELCLPQRLSYRAPVFRYEEPQTGKNREIYQIGVELIGEKSPGADAEVIMLAVESLKSSGLTDFQIDIGHAGFLNGVIEELKVTDSQGEQIKRWLNKKDMVSIRDFTSRVEIKNINKLLGIVRLRGKKEVLQRAKRLINNDKSKKALKDLELVYEYLCDYGVDNYVNFDLTLIRGFEYYTGIVFEAFTENLGYTICGGGRYDSLIYQYCGKEIPAIGFAIGIERVRLGLLNQGQELETPEIDVMVVFSYQARKPALEAIKKYRKQGLNVLQIEKEEVDQEFIKKHLKTGVKKIISFCEYSSNQKIKVIDDRGNIELLTPGGDLP</sequence>
<dbReference type="EMBL" id="CP001098">
    <property type="protein sequence ID" value="ACL68979.1"/>
    <property type="molecule type" value="Genomic_DNA"/>
</dbReference>
<dbReference type="RefSeq" id="WP_012635177.1">
    <property type="nucleotide sequence ID" value="NC_011899.1"/>
</dbReference>
<dbReference type="SMR" id="B8D110"/>
<dbReference type="STRING" id="373903.Hore_02180"/>
<dbReference type="KEGG" id="hor:Hore_02180"/>
<dbReference type="eggNOG" id="COG0124">
    <property type="taxonomic scope" value="Bacteria"/>
</dbReference>
<dbReference type="HOGENOM" id="CLU_025113_0_2_9"/>
<dbReference type="OrthoDB" id="9800814at2"/>
<dbReference type="UniPathway" id="UPA00031">
    <property type="reaction ID" value="UER00006"/>
</dbReference>
<dbReference type="Proteomes" id="UP000000719">
    <property type="component" value="Chromosome"/>
</dbReference>
<dbReference type="GO" id="GO:0005737">
    <property type="term" value="C:cytoplasm"/>
    <property type="evidence" value="ECO:0007669"/>
    <property type="project" value="UniProtKB-SubCell"/>
</dbReference>
<dbReference type="GO" id="GO:0005524">
    <property type="term" value="F:ATP binding"/>
    <property type="evidence" value="ECO:0007669"/>
    <property type="project" value="InterPro"/>
</dbReference>
<dbReference type="GO" id="GO:0140096">
    <property type="term" value="F:catalytic activity, acting on a protein"/>
    <property type="evidence" value="ECO:0007669"/>
    <property type="project" value="UniProtKB-ARBA"/>
</dbReference>
<dbReference type="GO" id="GO:0004821">
    <property type="term" value="F:histidine-tRNA ligase activity"/>
    <property type="evidence" value="ECO:0007669"/>
    <property type="project" value="InterPro"/>
</dbReference>
<dbReference type="GO" id="GO:0016740">
    <property type="term" value="F:transferase activity"/>
    <property type="evidence" value="ECO:0007669"/>
    <property type="project" value="UniProtKB-ARBA"/>
</dbReference>
<dbReference type="GO" id="GO:0006427">
    <property type="term" value="P:histidyl-tRNA aminoacylation"/>
    <property type="evidence" value="ECO:0007669"/>
    <property type="project" value="InterPro"/>
</dbReference>
<dbReference type="GO" id="GO:0000105">
    <property type="term" value="P:L-histidine biosynthetic process"/>
    <property type="evidence" value="ECO:0007669"/>
    <property type="project" value="UniProtKB-UniRule"/>
</dbReference>
<dbReference type="CDD" id="cd00773">
    <property type="entry name" value="HisRS-like_core"/>
    <property type="match status" value="1"/>
</dbReference>
<dbReference type="Gene3D" id="3.30.930.10">
    <property type="entry name" value="Bira Bifunctional Protein, Domain 2"/>
    <property type="match status" value="1"/>
</dbReference>
<dbReference type="HAMAP" id="MF_00125">
    <property type="entry name" value="HisZ"/>
    <property type="match status" value="1"/>
</dbReference>
<dbReference type="InterPro" id="IPR006195">
    <property type="entry name" value="aa-tRNA-synth_II"/>
</dbReference>
<dbReference type="InterPro" id="IPR045864">
    <property type="entry name" value="aa-tRNA-synth_II/BPL/LPL"/>
</dbReference>
<dbReference type="InterPro" id="IPR015807">
    <property type="entry name" value="His-tRNA-ligase"/>
</dbReference>
<dbReference type="InterPro" id="IPR041715">
    <property type="entry name" value="HisRS-like_core"/>
</dbReference>
<dbReference type="InterPro" id="IPR004516">
    <property type="entry name" value="HisRS/HisZ"/>
</dbReference>
<dbReference type="InterPro" id="IPR004517">
    <property type="entry name" value="HisZ"/>
</dbReference>
<dbReference type="NCBIfam" id="TIGR00442">
    <property type="entry name" value="hisS"/>
    <property type="match status" value="1"/>
</dbReference>
<dbReference type="NCBIfam" id="TIGR00443">
    <property type="entry name" value="hisZ_biosyn_reg"/>
    <property type="match status" value="1"/>
</dbReference>
<dbReference type="PANTHER" id="PTHR43707:SF1">
    <property type="entry name" value="HISTIDINE--TRNA LIGASE, MITOCHONDRIAL-RELATED"/>
    <property type="match status" value="1"/>
</dbReference>
<dbReference type="PANTHER" id="PTHR43707">
    <property type="entry name" value="HISTIDYL-TRNA SYNTHETASE"/>
    <property type="match status" value="1"/>
</dbReference>
<dbReference type="Pfam" id="PF13393">
    <property type="entry name" value="tRNA-synt_His"/>
    <property type="match status" value="1"/>
</dbReference>
<dbReference type="PIRSF" id="PIRSF001549">
    <property type="entry name" value="His-tRNA_synth"/>
    <property type="match status" value="1"/>
</dbReference>
<dbReference type="SUPFAM" id="SSF55681">
    <property type="entry name" value="Class II aaRS and biotin synthetases"/>
    <property type="match status" value="1"/>
</dbReference>
<dbReference type="PROSITE" id="PS50862">
    <property type="entry name" value="AA_TRNA_LIGASE_II"/>
    <property type="match status" value="1"/>
</dbReference>